<protein>
    <recommendedName>
        <fullName evidence="1">Large ribosomal subunit protein eL20</fullName>
    </recommendedName>
    <alternativeName>
        <fullName evidence="2">50S ribosomal protein L18Ae</fullName>
    </alternativeName>
    <alternativeName>
        <fullName evidence="1">50S ribosomal protein L20e</fullName>
    </alternativeName>
    <alternativeName>
        <fullName evidence="1">50S ribosomal protein LX</fullName>
    </alternativeName>
    <alternativeName>
        <fullName>LXA</fullName>
    </alternativeName>
</protein>
<dbReference type="EMBL" id="AE000782">
    <property type="protein sequence ID" value="AAB89206.1"/>
    <property type="molecule type" value="Genomic_DNA"/>
</dbReference>
<dbReference type="PIR" id="G69507">
    <property type="entry name" value="G69507"/>
</dbReference>
<dbReference type="RefSeq" id="WP_010879556.1">
    <property type="nucleotide sequence ID" value="NC_000917.1"/>
</dbReference>
<dbReference type="SMR" id="O28215"/>
<dbReference type="STRING" id="224325.AF_2064"/>
<dbReference type="PaxDb" id="224325-AF_2064"/>
<dbReference type="EnsemblBacteria" id="AAB89206">
    <property type="protein sequence ID" value="AAB89206"/>
    <property type="gene ID" value="AF_2064"/>
</dbReference>
<dbReference type="GeneID" id="24795813"/>
<dbReference type="KEGG" id="afu:AF_2064"/>
<dbReference type="eggNOG" id="arCOG04175">
    <property type="taxonomic scope" value="Archaea"/>
</dbReference>
<dbReference type="HOGENOM" id="CLU_177460_1_1_2"/>
<dbReference type="OrthoDB" id="191241at2157"/>
<dbReference type="PhylomeDB" id="O28215"/>
<dbReference type="Proteomes" id="UP000002199">
    <property type="component" value="Chromosome"/>
</dbReference>
<dbReference type="GO" id="GO:1990904">
    <property type="term" value="C:ribonucleoprotein complex"/>
    <property type="evidence" value="ECO:0007669"/>
    <property type="project" value="UniProtKB-KW"/>
</dbReference>
<dbReference type="GO" id="GO:0005840">
    <property type="term" value="C:ribosome"/>
    <property type="evidence" value="ECO:0007669"/>
    <property type="project" value="UniProtKB-KW"/>
</dbReference>
<dbReference type="GO" id="GO:0070180">
    <property type="term" value="F:large ribosomal subunit rRNA binding"/>
    <property type="evidence" value="ECO:0007669"/>
    <property type="project" value="UniProtKB-UniRule"/>
</dbReference>
<dbReference type="GO" id="GO:0003735">
    <property type="term" value="F:structural constituent of ribosome"/>
    <property type="evidence" value="ECO:0007669"/>
    <property type="project" value="InterPro"/>
</dbReference>
<dbReference type="GO" id="GO:0006412">
    <property type="term" value="P:translation"/>
    <property type="evidence" value="ECO:0007669"/>
    <property type="project" value="UniProtKB-UniRule"/>
</dbReference>
<dbReference type="Gene3D" id="3.10.20.10">
    <property type="match status" value="1"/>
</dbReference>
<dbReference type="HAMAP" id="MF_00273">
    <property type="entry name" value="Ribosomal_eL20"/>
    <property type="match status" value="1"/>
</dbReference>
<dbReference type="InterPro" id="IPR028877">
    <property type="entry name" value="Ribosomal_eL20"/>
</dbReference>
<dbReference type="InterPro" id="IPR023573">
    <property type="entry name" value="Ribosomal_eL20_dom"/>
</dbReference>
<dbReference type="NCBIfam" id="NF001981">
    <property type="entry name" value="PRK00773.1-1"/>
    <property type="match status" value="1"/>
</dbReference>
<dbReference type="Pfam" id="PF01775">
    <property type="entry name" value="Ribosomal_L18A"/>
    <property type="match status" value="1"/>
</dbReference>
<dbReference type="SUPFAM" id="SSF160374">
    <property type="entry name" value="RplX-like"/>
    <property type="match status" value="1"/>
</dbReference>
<sequence length="57" mass="6698">MKFEVRGAFKTLEGWQKFTKVVEANNERYALEKVYSLIGSNHKVKRNLIKIEEVKQA</sequence>
<comment type="subunit">
    <text evidence="1">Part of the 50S ribosomal subunit. Binds 23S rRNA.</text>
</comment>
<comment type="similarity">
    <text evidence="1">Belongs to the eukaryotic ribosomal protein eL20 family.</text>
</comment>
<name>RL18A_ARCFU</name>
<proteinExistence type="inferred from homology"/>
<reference key="1">
    <citation type="journal article" date="1997" name="Nature">
        <title>The complete genome sequence of the hyperthermophilic, sulphate-reducing archaeon Archaeoglobus fulgidus.</title>
        <authorList>
            <person name="Klenk H.-P."/>
            <person name="Clayton R.A."/>
            <person name="Tomb J.-F."/>
            <person name="White O."/>
            <person name="Nelson K.E."/>
            <person name="Ketchum K.A."/>
            <person name="Dodson R.J."/>
            <person name="Gwinn M.L."/>
            <person name="Hickey E.K."/>
            <person name="Peterson J.D."/>
            <person name="Richardson D.L."/>
            <person name="Kerlavage A.R."/>
            <person name="Graham D.E."/>
            <person name="Kyrpides N.C."/>
            <person name="Fleischmann R.D."/>
            <person name="Quackenbush J."/>
            <person name="Lee N.H."/>
            <person name="Sutton G.G."/>
            <person name="Gill S.R."/>
            <person name="Kirkness E.F."/>
            <person name="Dougherty B.A."/>
            <person name="McKenney K."/>
            <person name="Adams M.D."/>
            <person name="Loftus B.J."/>
            <person name="Peterson S.N."/>
            <person name="Reich C.I."/>
            <person name="McNeil L.K."/>
            <person name="Badger J.H."/>
            <person name="Glodek A."/>
            <person name="Zhou L."/>
            <person name="Overbeek R."/>
            <person name="Gocayne J.D."/>
            <person name="Weidman J.F."/>
            <person name="McDonald L.A."/>
            <person name="Utterback T.R."/>
            <person name="Cotton M.D."/>
            <person name="Spriggs T."/>
            <person name="Artiach P."/>
            <person name="Kaine B.P."/>
            <person name="Sykes S.M."/>
            <person name="Sadow P.W."/>
            <person name="D'Andrea K.P."/>
            <person name="Bowman C."/>
            <person name="Fujii C."/>
            <person name="Garland S.A."/>
            <person name="Mason T.M."/>
            <person name="Olsen G.J."/>
            <person name="Fraser C.M."/>
            <person name="Smith H.O."/>
            <person name="Woese C.R."/>
            <person name="Venter J.C."/>
        </authorList>
    </citation>
    <scope>NUCLEOTIDE SEQUENCE [LARGE SCALE GENOMIC DNA]</scope>
    <source>
        <strain>ATCC 49558 / DSM 4304 / JCM 9628 / NBRC 100126 / VC-16</strain>
    </source>
</reference>
<keyword id="KW-1185">Reference proteome</keyword>
<keyword id="KW-0687">Ribonucleoprotein</keyword>
<keyword id="KW-0689">Ribosomal protein</keyword>
<keyword id="KW-0694">RNA-binding</keyword>
<keyword id="KW-0699">rRNA-binding</keyword>
<gene>
    <name evidence="1" type="primary">rpl18a</name>
    <name evidence="1" type="synonym">rpl20e</name>
    <name evidence="1" type="synonym">rplX</name>
    <name evidence="1" type="synonym">rplXA</name>
    <name type="ordered locus">AF_2064</name>
</gene>
<organism>
    <name type="scientific">Archaeoglobus fulgidus (strain ATCC 49558 / DSM 4304 / JCM 9628 / NBRC 100126 / VC-16)</name>
    <dbReference type="NCBI Taxonomy" id="224325"/>
    <lineage>
        <taxon>Archaea</taxon>
        <taxon>Methanobacteriati</taxon>
        <taxon>Methanobacteriota</taxon>
        <taxon>Archaeoglobi</taxon>
        <taxon>Archaeoglobales</taxon>
        <taxon>Archaeoglobaceae</taxon>
        <taxon>Archaeoglobus</taxon>
    </lineage>
</organism>
<accession>O28215</accession>
<feature type="chain" id="PRO_0000153695" description="Large ribosomal subunit protein eL20">
    <location>
        <begin position="1"/>
        <end position="57"/>
    </location>
</feature>
<evidence type="ECO:0000255" key="1">
    <source>
        <dbReference type="HAMAP-Rule" id="MF_00273"/>
    </source>
</evidence>
<evidence type="ECO:0000305" key="2"/>